<dbReference type="EC" id="2.1.1.77" evidence="1"/>
<dbReference type="EMBL" id="CP000472">
    <property type="protein sequence ID" value="ACJ28149.1"/>
    <property type="molecule type" value="Genomic_DNA"/>
</dbReference>
<dbReference type="RefSeq" id="WP_020911527.1">
    <property type="nucleotide sequence ID" value="NC_011566.1"/>
</dbReference>
<dbReference type="SMR" id="B8CJQ2"/>
<dbReference type="STRING" id="225849.swp_1362"/>
<dbReference type="KEGG" id="swp:swp_1362"/>
<dbReference type="eggNOG" id="COG2518">
    <property type="taxonomic scope" value="Bacteria"/>
</dbReference>
<dbReference type="HOGENOM" id="CLU_055432_2_0_6"/>
<dbReference type="OrthoDB" id="9810066at2"/>
<dbReference type="Proteomes" id="UP000000753">
    <property type="component" value="Chromosome"/>
</dbReference>
<dbReference type="GO" id="GO:0005737">
    <property type="term" value="C:cytoplasm"/>
    <property type="evidence" value="ECO:0007669"/>
    <property type="project" value="UniProtKB-SubCell"/>
</dbReference>
<dbReference type="GO" id="GO:0004719">
    <property type="term" value="F:protein-L-isoaspartate (D-aspartate) O-methyltransferase activity"/>
    <property type="evidence" value="ECO:0007669"/>
    <property type="project" value="UniProtKB-UniRule"/>
</dbReference>
<dbReference type="GO" id="GO:0032259">
    <property type="term" value="P:methylation"/>
    <property type="evidence" value="ECO:0007669"/>
    <property type="project" value="UniProtKB-KW"/>
</dbReference>
<dbReference type="GO" id="GO:0036211">
    <property type="term" value="P:protein modification process"/>
    <property type="evidence" value="ECO:0007669"/>
    <property type="project" value="UniProtKB-UniRule"/>
</dbReference>
<dbReference type="GO" id="GO:0030091">
    <property type="term" value="P:protein repair"/>
    <property type="evidence" value="ECO:0007669"/>
    <property type="project" value="UniProtKB-UniRule"/>
</dbReference>
<dbReference type="CDD" id="cd02440">
    <property type="entry name" value="AdoMet_MTases"/>
    <property type="match status" value="1"/>
</dbReference>
<dbReference type="FunFam" id="3.40.50.150:FF:000010">
    <property type="entry name" value="Protein-L-isoaspartate O-methyltransferase"/>
    <property type="match status" value="1"/>
</dbReference>
<dbReference type="Gene3D" id="3.40.50.150">
    <property type="entry name" value="Vaccinia Virus protein VP39"/>
    <property type="match status" value="1"/>
</dbReference>
<dbReference type="HAMAP" id="MF_00090">
    <property type="entry name" value="PIMT"/>
    <property type="match status" value="1"/>
</dbReference>
<dbReference type="InterPro" id="IPR000682">
    <property type="entry name" value="PCMT"/>
</dbReference>
<dbReference type="InterPro" id="IPR029063">
    <property type="entry name" value="SAM-dependent_MTases_sf"/>
</dbReference>
<dbReference type="NCBIfam" id="TIGR00080">
    <property type="entry name" value="pimt"/>
    <property type="match status" value="1"/>
</dbReference>
<dbReference type="NCBIfam" id="NF001453">
    <property type="entry name" value="PRK00312.1"/>
    <property type="match status" value="1"/>
</dbReference>
<dbReference type="PANTHER" id="PTHR11579">
    <property type="entry name" value="PROTEIN-L-ISOASPARTATE O-METHYLTRANSFERASE"/>
    <property type="match status" value="1"/>
</dbReference>
<dbReference type="PANTHER" id="PTHR11579:SF0">
    <property type="entry name" value="PROTEIN-L-ISOASPARTATE(D-ASPARTATE) O-METHYLTRANSFERASE"/>
    <property type="match status" value="1"/>
</dbReference>
<dbReference type="Pfam" id="PF01135">
    <property type="entry name" value="PCMT"/>
    <property type="match status" value="1"/>
</dbReference>
<dbReference type="SUPFAM" id="SSF53335">
    <property type="entry name" value="S-adenosyl-L-methionine-dependent methyltransferases"/>
    <property type="match status" value="1"/>
</dbReference>
<dbReference type="PROSITE" id="PS01279">
    <property type="entry name" value="PCMT"/>
    <property type="match status" value="1"/>
</dbReference>
<comment type="function">
    <text evidence="1">Catalyzes the methyl esterification of L-isoaspartyl residues in peptides and proteins that result from spontaneous decomposition of normal L-aspartyl and L-asparaginyl residues. It plays a role in the repair and/or degradation of damaged proteins.</text>
</comment>
<comment type="catalytic activity">
    <reaction evidence="1">
        <text>[protein]-L-isoaspartate + S-adenosyl-L-methionine = [protein]-L-isoaspartate alpha-methyl ester + S-adenosyl-L-homocysteine</text>
        <dbReference type="Rhea" id="RHEA:12705"/>
        <dbReference type="Rhea" id="RHEA-COMP:12143"/>
        <dbReference type="Rhea" id="RHEA-COMP:12144"/>
        <dbReference type="ChEBI" id="CHEBI:57856"/>
        <dbReference type="ChEBI" id="CHEBI:59789"/>
        <dbReference type="ChEBI" id="CHEBI:90596"/>
        <dbReference type="ChEBI" id="CHEBI:90598"/>
        <dbReference type="EC" id="2.1.1.77"/>
    </reaction>
</comment>
<comment type="subcellular location">
    <subcellularLocation>
        <location evidence="1">Cytoplasm</location>
    </subcellularLocation>
</comment>
<comment type="similarity">
    <text evidence="1">Belongs to the methyltransferase superfamily. L-isoaspartyl/D-aspartyl protein methyltransferase family.</text>
</comment>
<name>PIMT_SHEPW</name>
<sequence>MDRLASTSALNLARSLYEAGIRDEPVLKAVANTPRERFLDAALGHKAYENTALPIGQGQTISQPYIVARMTEILLQCQPQKVLEIGTGSGYQAAILAQLVPQLCTVERIKSLQIQARQRLKKLDLHNIAFKYGDGWQGWPSKGPYDAIMVTAAAASVPNALTEQLTDGGVLVIPVGEASQQLLKVTRKGNQYVSEAIEIVRFVPLINGELA</sequence>
<feature type="chain" id="PRO_1000117211" description="Protein-L-isoaspartate O-methyltransferase">
    <location>
        <begin position="1"/>
        <end position="211"/>
    </location>
</feature>
<feature type="active site" evidence="1">
    <location>
        <position position="62"/>
    </location>
</feature>
<evidence type="ECO:0000255" key="1">
    <source>
        <dbReference type="HAMAP-Rule" id="MF_00090"/>
    </source>
</evidence>
<organism>
    <name type="scientific">Shewanella piezotolerans (strain WP3 / JCM 13877)</name>
    <dbReference type="NCBI Taxonomy" id="225849"/>
    <lineage>
        <taxon>Bacteria</taxon>
        <taxon>Pseudomonadati</taxon>
        <taxon>Pseudomonadota</taxon>
        <taxon>Gammaproteobacteria</taxon>
        <taxon>Alteromonadales</taxon>
        <taxon>Shewanellaceae</taxon>
        <taxon>Shewanella</taxon>
    </lineage>
</organism>
<keyword id="KW-0963">Cytoplasm</keyword>
<keyword id="KW-0489">Methyltransferase</keyword>
<keyword id="KW-0949">S-adenosyl-L-methionine</keyword>
<keyword id="KW-0808">Transferase</keyword>
<gene>
    <name evidence="1" type="primary">pcm</name>
    <name type="ordered locus">swp_1362</name>
</gene>
<proteinExistence type="inferred from homology"/>
<accession>B8CJQ2</accession>
<protein>
    <recommendedName>
        <fullName evidence="1">Protein-L-isoaspartate O-methyltransferase</fullName>
        <ecNumber evidence="1">2.1.1.77</ecNumber>
    </recommendedName>
    <alternativeName>
        <fullName evidence="1">L-isoaspartyl protein carboxyl methyltransferase</fullName>
    </alternativeName>
    <alternativeName>
        <fullName evidence="1">Protein L-isoaspartyl methyltransferase</fullName>
    </alternativeName>
    <alternativeName>
        <fullName evidence="1">Protein-beta-aspartate methyltransferase</fullName>
        <shortName evidence="1">PIMT</shortName>
    </alternativeName>
</protein>
<reference key="1">
    <citation type="journal article" date="2008" name="PLoS ONE">
        <title>Environmental adaptation: genomic analysis of the piezotolerant and psychrotolerant deep-sea iron reducing bacterium Shewanella piezotolerans WP3.</title>
        <authorList>
            <person name="Wang F."/>
            <person name="Wang J."/>
            <person name="Jian H."/>
            <person name="Zhang B."/>
            <person name="Li S."/>
            <person name="Wang F."/>
            <person name="Zeng X."/>
            <person name="Gao L."/>
            <person name="Bartlett D.H."/>
            <person name="Yu J."/>
            <person name="Hu S."/>
            <person name="Xiao X."/>
        </authorList>
    </citation>
    <scope>NUCLEOTIDE SEQUENCE [LARGE SCALE GENOMIC DNA]</scope>
    <source>
        <strain>WP3 / JCM 13877</strain>
    </source>
</reference>